<name>RM17_NEUCR</name>
<organism>
    <name type="scientific">Neurospora crassa (strain ATCC 24698 / 74-OR23-1A / CBS 708.71 / DSM 1257 / FGSC 987)</name>
    <dbReference type="NCBI Taxonomy" id="367110"/>
    <lineage>
        <taxon>Eukaryota</taxon>
        <taxon>Fungi</taxon>
        <taxon>Dikarya</taxon>
        <taxon>Ascomycota</taxon>
        <taxon>Pezizomycotina</taxon>
        <taxon>Sordariomycetes</taxon>
        <taxon>Sordariomycetidae</taxon>
        <taxon>Sordariales</taxon>
        <taxon>Sordariaceae</taxon>
        <taxon>Neurospora</taxon>
    </lineage>
</organism>
<reference key="1">
    <citation type="journal article" date="2003" name="Nature">
        <title>The genome sequence of the filamentous fungus Neurospora crassa.</title>
        <authorList>
            <person name="Galagan J.E."/>
            <person name="Calvo S.E."/>
            <person name="Borkovich K.A."/>
            <person name="Selker E.U."/>
            <person name="Read N.D."/>
            <person name="Jaffe D.B."/>
            <person name="FitzHugh W."/>
            <person name="Ma L.-J."/>
            <person name="Smirnov S."/>
            <person name="Purcell S."/>
            <person name="Rehman B."/>
            <person name="Elkins T."/>
            <person name="Engels R."/>
            <person name="Wang S."/>
            <person name="Nielsen C.B."/>
            <person name="Butler J."/>
            <person name="Endrizzi M."/>
            <person name="Qui D."/>
            <person name="Ianakiev P."/>
            <person name="Bell-Pedersen D."/>
            <person name="Nelson M.A."/>
            <person name="Werner-Washburne M."/>
            <person name="Selitrennikoff C.P."/>
            <person name="Kinsey J.A."/>
            <person name="Braun E.L."/>
            <person name="Zelter A."/>
            <person name="Schulte U."/>
            <person name="Kothe G.O."/>
            <person name="Jedd G."/>
            <person name="Mewes H.-W."/>
            <person name="Staben C."/>
            <person name="Marcotte E."/>
            <person name="Greenberg D."/>
            <person name="Roy A."/>
            <person name="Foley K."/>
            <person name="Naylor J."/>
            <person name="Stange-Thomann N."/>
            <person name="Barrett R."/>
            <person name="Gnerre S."/>
            <person name="Kamal M."/>
            <person name="Kamvysselis M."/>
            <person name="Mauceli E.W."/>
            <person name="Bielke C."/>
            <person name="Rudd S."/>
            <person name="Frishman D."/>
            <person name="Krystofova S."/>
            <person name="Rasmussen C."/>
            <person name="Metzenberg R.L."/>
            <person name="Perkins D.D."/>
            <person name="Kroken S."/>
            <person name="Cogoni C."/>
            <person name="Macino G."/>
            <person name="Catcheside D.E.A."/>
            <person name="Li W."/>
            <person name="Pratt R.J."/>
            <person name="Osmani S.A."/>
            <person name="DeSouza C.P.C."/>
            <person name="Glass N.L."/>
            <person name="Orbach M.J."/>
            <person name="Berglund J.A."/>
            <person name="Voelker R."/>
            <person name="Yarden O."/>
            <person name="Plamann M."/>
            <person name="Seiler S."/>
            <person name="Dunlap J.C."/>
            <person name="Radford A."/>
            <person name="Aramayo R."/>
            <person name="Natvig D.O."/>
            <person name="Alex L.A."/>
            <person name="Mannhaupt G."/>
            <person name="Ebbole D.J."/>
            <person name="Freitag M."/>
            <person name="Paulsen I."/>
            <person name="Sachs M.S."/>
            <person name="Lander E.S."/>
            <person name="Nusbaum C."/>
            <person name="Birren B.W."/>
        </authorList>
    </citation>
    <scope>NUCLEOTIDE SEQUENCE [LARGE SCALE GENOMIC DNA]</scope>
    <source>
        <strain>ATCC 24698 / 74-OR23-1A / CBS 708.71 / DSM 1257 / FGSC 987</strain>
    </source>
</reference>
<reference key="2">
    <citation type="journal article" date="2006" name="FEMS Microbiol. Lett.">
        <title>Identification and comparative analysis of the large subunit mitochondrial ribosomal proteins of Neurospora crassa.</title>
        <authorList>
            <person name="Gan X."/>
            <person name="Arita K."/>
            <person name="Isono S."/>
            <person name="Kitakawa M."/>
            <person name="Yoshino K."/>
            <person name="Yonezawa K."/>
            <person name="Kato A."/>
            <person name="Inoue H."/>
            <person name="Isono K."/>
        </authorList>
    </citation>
    <scope>IDENTIFICATION IN THE MITOCHONDRIAL RIBOSOMAL LARGE COMPLEX</scope>
    <scope>IDENTIFICATION BY MASS SPECTROMETRY</scope>
</reference>
<reference evidence="7 8" key="3">
    <citation type="journal article" date="2020" name="Nat. Commun.">
        <title>Analysis of translating mitoribosome reveals functional characteristics of translation in mitochondria of fungi.</title>
        <authorList>
            <person name="Itoh Y."/>
            <person name="Naschberger A."/>
            <person name="Mortezaei N."/>
            <person name="Herrmann J.M."/>
            <person name="Amunts A."/>
        </authorList>
    </citation>
    <scope>STRUCTURE BY ELECTRON MICROSCOPY (2.74 ANGSTROMS)</scope>
</reference>
<dbReference type="EMBL" id="CM002238">
    <property type="protein sequence ID" value="EAA29369.1"/>
    <property type="molecule type" value="Genomic_DNA"/>
</dbReference>
<dbReference type="RefSeq" id="XP_958605.1">
    <property type="nucleotide sequence ID" value="XM_953512.3"/>
</dbReference>
<dbReference type="PDB" id="6YWS">
    <property type="method" value="EM"/>
    <property type="resolution" value="2.74 A"/>
    <property type="chains" value="6=1-368"/>
</dbReference>
<dbReference type="PDB" id="6YWV">
    <property type="method" value="EM"/>
    <property type="resolution" value="3.03 A"/>
    <property type="chains" value="6=1-368"/>
</dbReference>
<dbReference type="PDB" id="6YWX">
    <property type="method" value="EM"/>
    <property type="resolution" value="3.10 A"/>
    <property type="chains" value="6=1-368"/>
</dbReference>
<dbReference type="PDBsum" id="6YWS"/>
<dbReference type="PDBsum" id="6YWV"/>
<dbReference type="PDBsum" id="6YWX"/>
<dbReference type="EMDB" id="EMD-10973"/>
<dbReference type="EMDB" id="EMD-10977"/>
<dbReference type="EMDB" id="EMD-10978"/>
<dbReference type="SMR" id="Q7S1Z3"/>
<dbReference type="FunCoup" id="Q7S1Z3">
    <property type="interactions" value="423"/>
</dbReference>
<dbReference type="STRING" id="367110.Q7S1Z3"/>
<dbReference type="PaxDb" id="5141-EFNCRP00000007887"/>
<dbReference type="EnsemblFungi" id="EAA29369">
    <property type="protein sequence ID" value="EAA29369"/>
    <property type="gene ID" value="NCU07560"/>
</dbReference>
<dbReference type="GeneID" id="3874752"/>
<dbReference type="KEGG" id="ncr:NCU07560"/>
<dbReference type="VEuPathDB" id="FungiDB:NCU07560"/>
<dbReference type="HOGENOM" id="CLU_040204_1_1_1"/>
<dbReference type="InParanoid" id="Q7S1Z3"/>
<dbReference type="OMA" id="HPFENAF"/>
<dbReference type="OrthoDB" id="414075at2759"/>
<dbReference type="Proteomes" id="UP000001805">
    <property type="component" value="Chromosome 3, Linkage Group III"/>
</dbReference>
<dbReference type="GO" id="GO:0005762">
    <property type="term" value="C:mitochondrial large ribosomal subunit"/>
    <property type="evidence" value="ECO:0000318"/>
    <property type="project" value="GO_Central"/>
</dbReference>
<dbReference type="GO" id="GO:0003735">
    <property type="term" value="F:structural constituent of ribosome"/>
    <property type="evidence" value="ECO:0000318"/>
    <property type="project" value="GO_Central"/>
</dbReference>
<dbReference type="CDD" id="cd04661">
    <property type="entry name" value="NUDIX_MRP_L46"/>
    <property type="match status" value="1"/>
</dbReference>
<dbReference type="FunFam" id="3.90.79.10:FF:000018">
    <property type="entry name" value="39S ribosomal protein L46, mitochondrial"/>
    <property type="match status" value="1"/>
</dbReference>
<dbReference type="Gene3D" id="3.90.79.10">
    <property type="entry name" value="Nucleoside Triphosphate Pyrophosphohydrolase"/>
    <property type="match status" value="1"/>
</dbReference>
<dbReference type="InterPro" id="IPR015797">
    <property type="entry name" value="NUDIX_hydrolase-like_dom_sf"/>
</dbReference>
<dbReference type="InterPro" id="IPR000086">
    <property type="entry name" value="NUDIX_hydrolase_dom"/>
</dbReference>
<dbReference type="InterPro" id="IPR040008">
    <property type="entry name" value="Ribosomal_mL46"/>
</dbReference>
<dbReference type="InterPro" id="IPR021757">
    <property type="entry name" value="Ribosomal_mL46_N"/>
</dbReference>
<dbReference type="InterPro" id="IPR033650">
    <property type="entry name" value="Ribosomal_mL46_NUDIX"/>
</dbReference>
<dbReference type="PANTHER" id="PTHR13124">
    <property type="entry name" value="39S RIBOSOMAL PROTEIN L46, MITOCHONDRIAL PRECURSOR-RELATED"/>
    <property type="match status" value="1"/>
</dbReference>
<dbReference type="PANTHER" id="PTHR13124:SF12">
    <property type="entry name" value="LARGE RIBOSOMAL SUBUNIT PROTEIN ML46"/>
    <property type="match status" value="1"/>
</dbReference>
<dbReference type="Pfam" id="PF11788">
    <property type="entry name" value="MRP-L46"/>
    <property type="match status" value="1"/>
</dbReference>
<dbReference type="Pfam" id="PF00293">
    <property type="entry name" value="NUDIX"/>
    <property type="match status" value="1"/>
</dbReference>
<dbReference type="SUPFAM" id="SSF55811">
    <property type="entry name" value="Nudix"/>
    <property type="match status" value="1"/>
</dbReference>
<proteinExistence type="evidence at protein level"/>
<accession>Q7S1Z3</accession>
<sequence>MSASSRGAALLRSQQRSICLQCRNQTRVLAPAGVTSAPRRFYSAEASATATATATATTTTTLPPPHPPVTTSTGTHAATSTSSQIYRIKSGVILTRPPLLTRDLTPFEESFYFYQKRLNERLTAPFRKDFYFKKDTAADLDWRIKLKERHGVPAKDIGRYNPRGRMAWNDEVLVGSQTSSRKHMVEKLLADAEMRVSEDGEEIPAEDRVPVEKPMPRRTEADEKGDVKRLDRALDKTLYLVVKKKADKEGEEAKWMFPTGVVPTDEGLHETAARILAESAGVNMNTWIVGRVPVAHHVVRPVFGQKDGALLKKGEKIFFLKGRIMAGQADLTDNLHDLVDFKWLTQEELRSTLAEEYFHSVKGMFAER</sequence>
<gene>
    <name type="primary">mrpl17</name>
    <name type="ORF">NCU07560</name>
</gene>
<evidence type="ECO:0000256" key="1">
    <source>
        <dbReference type="SAM" id="MobiDB-lite"/>
    </source>
</evidence>
<evidence type="ECO:0000269" key="2">
    <source>
    </source>
</evidence>
<evidence type="ECO:0000269" key="3">
    <source>
    </source>
</evidence>
<evidence type="ECO:0000303" key="4">
    <source>
    </source>
</evidence>
<evidence type="ECO:0000305" key="5"/>
<evidence type="ECO:0000305" key="6">
    <source>
    </source>
</evidence>
<evidence type="ECO:0007744" key="7">
    <source>
        <dbReference type="PDB" id="6YWS"/>
    </source>
</evidence>
<evidence type="ECO:0007744" key="8">
    <source>
        <dbReference type="PDB" id="6YWV"/>
    </source>
</evidence>
<protein>
    <recommendedName>
        <fullName evidence="4">Large ribosomal subunit protein mL46</fullName>
    </recommendedName>
</protein>
<comment type="function">
    <text evidence="6">Component of the mitochondrial ribosome (mitoribosome), a dedicated translation machinery responsible for the synthesis of mitochondrial genome-encoded proteins, including at least some of the essential transmembrane subunits of the mitochondrial respiratory chain. The mitoribosomes are attached to the mitochondrial inner membrane and translation products are cotranslationally integrated into the membrane.</text>
</comment>
<comment type="subunit">
    <text evidence="2 3">Component of the mitochondrial large ribosomal subunit (mt-LSU). Mature N.crassa 74S mitochondrial ribosomes consist of a small (37S) and a large (54S) subunit. The 37S small subunit contains a 16S ribosomal RNA (16S mt-rRNA) and 32 different proteins. The 54S large subunit contains a 23S rRNA (23S mt-rRNA) and 42 different proteins.</text>
</comment>
<comment type="subcellular location">
    <subcellularLocation>
        <location evidence="2 3">Mitochondrion</location>
    </subcellularLocation>
</comment>
<comment type="similarity">
    <text evidence="5">Belongs to the mitochondrion-specific ribosomal protein mL46 family.</text>
</comment>
<feature type="chain" id="PRO_0000458596" description="Large ribosomal subunit protein mL46">
    <location>
        <begin position="1"/>
        <end position="368"/>
    </location>
</feature>
<feature type="region of interest" description="Disordered" evidence="1">
    <location>
        <begin position="53"/>
        <end position="81"/>
    </location>
</feature>
<feature type="compositionally biased region" description="Low complexity" evidence="1">
    <location>
        <begin position="69"/>
        <end position="81"/>
    </location>
</feature>
<keyword id="KW-0002">3D-structure</keyword>
<keyword id="KW-0496">Mitochondrion</keyword>
<keyword id="KW-1185">Reference proteome</keyword>
<keyword id="KW-0687">Ribonucleoprotein</keyword>
<keyword id="KW-0689">Ribosomal protein</keyword>
<keyword id="KW-0809">Transit peptide</keyword>